<feature type="chain" id="PRO_0000061375" description="Cytochrome b">
    <location>
        <begin position="1"/>
        <end position="379"/>
    </location>
</feature>
<feature type="transmembrane region" description="Helical" evidence="2">
    <location>
        <begin position="33"/>
        <end position="53"/>
    </location>
</feature>
<feature type="transmembrane region" description="Helical" evidence="2">
    <location>
        <begin position="77"/>
        <end position="98"/>
    </location>
</feature>
<feature type="transmembrane region" description="Helical" evidence="2">
    <location>
        <begin position="113"/>
        <end position="133"/>
    </location>
</feature>
<feature type="transmembrane region" description="Helical" evidence="2">
    <location>
        <begin position="178"/>
        <end position="198"/>
    </location>
</feature>
<feature type="transmembrane region" description="Helical" evidence="2">
    <location>
        <begin position="226"/>
        <end position="246"/>
    </location>
</feature>
<feature type="transmembrane region" description="Helical" evidence="2">
    <location>
        <begin position="288"/>
        <end position="308"/>
    </location>
</feature>
<feature type="transmembrane region" description="Helical" evidence="2">
    <location>
        <begin position="320"/>
        <end position="340"/>
    </location>
</feature>
<feature type="transmembrane region" description="Helical" evidence="2">
    <location>
        <begin position="347"/>
        <end position="367"/>
    </location>
</feature>
<feature type="binding site" description="axial binding residue" evidence="2">
    <location>
        <position position="83"/>
    </location>
    <ligand>
        <name>heme b</name>
        <dbReference type="ChEBI" id="CHEBI:60344"/>
        <label>b562</label>
    </ligand>
    <ligandPart>
        <name>Fe</name>
        <dbReference type="ChEBI" id="CHEBI:18248"/>
    </ligandPart>
</feature>
<feature type="binding site" description="axial binding residue" evidence="2">
    <location>
        <position position="97"/>
    </location>
    <ligand>
        <name>heme b</name>
        <dbReference type="ChEBI" id="CHEBI:60344"/>
        <label>b566</label>
    </ligand>
    <ligandPart>
        <name>Fe</name>
        <dbReference type="ChEBI" id="CHEBI:18248"/>
    </ligandPart>
</feature>
<feature type="binding site" description="axial binding residue" evidence="2">
    <location>
        <position position="182"/>
    </location>
    <ligand>
        <name>heme b</name>
        <dbReference type="ChEBI" id="CHEBI:60344"/>
        <label>b562</label>
    </ligand>
    <ligandPart>
        <name>Fe</name>
        <dbReference type="ChEBI" id="CHEBI:18248"/>
    </ligandPart>
</feature>
<feature type="binding site" description="axial binding residue" evidence="2">
    <location>
        <position position="196"/>
    </location>
    <ligand>
        <name>heme b</name>
        <dbReference type="ChEBI" id="CHEBI:60344"/>
        <label>b566</label>
    </ligand>
    <ligandPart>
        <name>Fe</name>
        <dbReference type="ChEBI" id="CHEBI:18248"/>
    </ligandPart>
</feature>
<feature type="binding site" evidence="2">
    <location>
        <position position="201"/>
    </location>
    <ligand>
        <name>a ubiquinone</name>
        <dbReference type="ChEBI" id="CHEBI:16389"/>
    </ligand>
</feature>
<gene>
    <name type="primary">MT-CYB</name>
    <name type="synonym">COB</name>
    <name type="synonym">CYTB</name>
    <name type="synonym">MTCYB</name>
</gene>
<keyword id="KW-0249">Electron transport</keyword>
<keyword id="KW-0349">Heme</keyword>
<keyword id="KW-0408">Iron</keyword>
<keyword id="KW-0472">Membrane</keyword>
<keyword id="KW-0479">Metal-binding</keyword>
<keyword id="KW-0496">Mitochondrion</keyword>
<keyword id="KW-0999">Mitochondrion inner membrane</keyword>
<keyword id="KW-0679">Respiratory chain</keyword>
<keyword id="KW-0812">Transmembrane</keyword>
<keyword id="KW-1133">Transmembrane helix</keyword>
<keyword id="KW-0813">Transport</keyword>
<keyword id="KW-0830">Ubiquinone</keyword>
<proteinExistence type="inferred from homology"/>
<reference key="1">
    <citation type="journal article" date="1999" name="Cladistics">
        <title>Molecular phylogeny and biogeography of Madagascar's native rodents (Muridae: Nesomyinae): a test of the single origin hypothesis.</title>
        <authorList>
            <person name="Jansa S.A."/>
            <person name="Goodman S.M."/>
            <person name="Tucker P.K."/>
        </authorList>
    </citation>
    <scope>NUCLEOTIDE SEQUENCE [GENOMIC DNA]</scope>
    <source>
        <strain>Isolate Pcol535</strain>
    </source>
</reference>
<sequence>MTNMRKSHPLFKIINHSFIDLPTPSSISSWWNFGSLLGICLVLQILTGLFLAMHYTSDTMTAFSSVTHICRDVNYGWLIRYMHANGASMFFICLFLHVGRGIYYGSYMFTETWNIGIILLFAVMATAFMGYVLPWGQMSFWGATVITNLLSAIPYIGTMLVEWIWGGFSVDKATLTRFFAFHFILPFIITALAMVHLLFLHETGSNNPSGLDPNADKIPFHPYYTIKDTLGVLIFITVMLVLVLFSPDLLGDPDNYTPANPLNTPPHIKPEWYFLFAYAILRSIPNKLGGVMALVLSILILMLFPLLHTSKQRSLMFRPITQTLFWILVVDLLILTWIGGQPVEHPFIIIGQLASILYFSIILIFMPISGLIENKILKI</sequence>
<geneLocation type="mitochondrion"/>
<organism>
    <name type="scientific">Petromyscus collinus</name>
    <name type="common">Pygmy rock mouse</name>
    <dbReference type="NCBI Taxonomy" id="107279"/>
    <lineage>
        <taxon>Eukaryota</taxon>
        <taxon>Metazoa</taxon>
        <taxon>Chordata</taxon>
        <taxon>Craniata</taxon>
        <taxon>Vertebrata</taxon>
        <taxon>Euteleostomi</taxon>
        <taxon>Mammalia</taxon>
        <taxon>Eutheria</taxon>
        <taxon>Euarchontoglires</taxon>
        <taxon>Glires</taxon>
        <taxon>Rodentia</taxon>
        <taxon>Myomorpha</taxon>
        <taxon>Muroidea</taxon>
        <taxon>Nesomyidae</taxon>
        <taxon>Petromyscinae</taxon>
        <taxon>Petromyscus</taxon>
    </lineage>
</organism>
<accession>Q9T7P1</accession>
<evidence type="ECO:0000250" key="1"/>
<evidence type="ECO:0000250" key="2">
    <source>
        <dbReference type="UniProtKB" id="P00157"/>
    </source>
</evidence>
<evidence type="ECO:0000255" key="3">
    <source>
        <dbReference type="PROSITE-ProRule" id="PRU00967"/>
    </source>
</evidence>
<evidence type="ECO:0000255" key="4">
    <source>
        <dbReference type="PROSITE-ProRule" id="PRU00968"/>
    </source>
</evidence>
<comment type="function">
    <text evidence="2">Component of the ubiquinol-cytochrome c reductase complex (complex III or cytochrome b-c1 complex) that is part of the mitochondrial respiratory chain. The b-c1 complex mediates electron transfer from ubiquinol to cytochrome c. Contributes to the generation of a proton gradient across the mitochondrial membrane that is then used for ATP synthesis.</text>
</comment>
<comment type="cofactor">
    <cofactor evidence="2">
        <name>heme b</name>
        <dbReference type="ChEBI" id="CHEBI:60344"/>
    </cofactor>
    <text evidence="2">Binds 2 heme b groups non-covalently.</text>
</comment>
<comment type="subunit">
    <text evidence="2">The cytochrome bc1 complex contains 11 subunits: 3 respiratory subunits (MT-CYB, CYC1 and UQCRFS1), 2 core proteins (UQCRC1 and UQCRC2) and 6 low-molecular weight proteins (UQCRH/QCR6, UQCRB/QCR7, UQCRQ/QCR8, UQCR10/QCR9, UQCR11/QCR10 and a cleavage product of UQCRFS1). This cytochrome bc1 complex then forms a dimer.</text>
</comment>
<comment type="subcellular location">
    <subcellularLocation>
        <location evidence="2">Mitochondrion inner membrane</location>
        <topology evidence="2">Multi-pass membrane protein</topology>
    </subcellularLocation>
</comment>
<comment type="miscellaneous">
    <text evidence="1">Heme 1 (or BL or b562) is low-potential and absorbs at about 562 nm, and heme 2 (or BH or b566) is high-potential and absorbs at about 566 nm.</text>
</comment>
<comment type="similarity">
    <text evidence="3 4">Belongs to the cytochrome b family.</text>
</comment>
<comment type="caution">
    <text evidence="2">The full-length protein contains only eight transmembrane helices, not nine as predicted by bioinformatics tools.</text>
</comment>
<dbReference type="EMBL" id="AF160601">
    <property type="protein sequence ID" value="AAF15217.1"/>
    <property type="molecule type" value="Genomic_DNA"/>
</dbReference>
<dbReference type="SMR" id="Q9T7P1"/>
<dbReference type="GO" id="GO:0005743">
    <property type="term" value="C:mitochondrial inner membrane"/>
    <property type="evidence" value="ECO:0007669"/>
    <property type="project" value="UniProtKB-SubCell"/>
</dbReference>
<dbReference type="GO" id="GO:0045275">
    <property type="term" value="C:respiratory chain complex III"/>
    <property type="evidence" value="ECO:0007669"/>
    <property type="project" value="InterPro"/>
</dbReference>
<dbReference type="GO" id="GO:0046872">
    <property type="term" value="F:metal ion binding"/>
    <property type="evidence" value="ECO:0007669"/>
    <property type="project" value="UniProtKB-KW"/>
</dbReference>
<dbReference type="GO" id="GO:0008121">
    <property type="term" value="F:ubiquinol-cytochrome-c reductase activity"/>
    <property type="evidence" value="ECO:0007669"/>
    <property type="project" value="InterPro"/>
</dbReference>
<dbReference type="GO" id="GO:0006122">
    <property type="term" value="P:mitochondrial electron transport, ubiquinol to cytochrome c"/>
    <property type="evidence" value="ECO:0007669"/>
    <property type="project" value="TreeGrafter"/>
</dbReference>
<dbReference type="CDD" id="cd00290">
    <property type="entry name" value="cytochrome_b_C"/>
    <property type="match status" value="1"/>
</dbReference>
<dbReference type="CDD" id="cd00284">
    <property type="entry name" value="Cytochrome_b_N"/>
    <property type="match status" value="1"/>
</dbReference>
<dbReference type="FunFam" id="1.20.810.10:FF:000002">
    <property type="entry name" value="Cytochrome b"/>
    <property type="match status" value="1"/>
</dbReference>
<dbReference type="Gene3D" id="1.20.810.10">
    <property type="entry name" value="Cytochrome Bc1 Complex, Chain C"/>
    <property type="match status" value="1"/>
</dbReference>
<dbReference type="InterPro" id="IPR005798">
    <property type="entry name" value="Cyt_b/b6_C"/>
</dbReference>
<dbReference type="InterPro" id="IPR036150">
    <property type="entry name" value="Cyt_b/b6_C_sf"/>
</dbReference>
<dbReference type="InterPro" id="IPR005797">
    <property type="entry name" value="Cyt_b/b6_N"/>
</dbReference>
<dbReference type="InterPro" id="IPR027387">
    <property type="entry name" value="Cytb/b6-like_sf"/>
</dbReference>
<dbReference type="InterPro" id="IPR030689">
    <property type="entry name" value="Cytochrome_b"/>
</dbReference>
<dbReference type="InterPro" id="IPR048260">
    <property type="entry name" value="Cytochrome_b_C_euk/bac"/>
</dbReference>
<dbReference type="InterPro" id="IPR048259">
    <property type="entry name" value="Cytochrome_b_N_euk/bac"/>
</dbReference>
<dbReference type="InterPro" id="IPR016174">
    <property type="entry name" value="Di-haem_cyt_TM"/>
</dbReference>
<dbReference type="PANTHER" id="PTHR19271">
    <property type="entry name" value="CYTOCHROME B"/>
    <property type="match status" value="1"/>
</dbReference>
<dbReference type="PANTHER" id="PTHR19271:SF16">
    <property type="entry name" value="CYTOCHROME B"/>
    <property type="match status" value="1"/>
</dbReference>
<dbReference type="Pfam" id="PF00032">
    <property type="entry name" value="Cytochrom_B_C"/>
    <property type="match status" value="1"/>
</dbReference>
<dbReference type="Pfam" id="PF00033">
    <property type="entry name" value="Cytochrome_B"/>
    <property type="match status" value="1"/>
</dbReference>
<dbReference type="PIRSF" id="PIRSF038885">
    <property type="entry name" value="COB"/>
    <property type="match status" value="1"/>
</dbReference>
<dbReference type="SUPFAM" id="SSF81648">
    <property type="entry name" value="a domain/subunit of cytochrome bc1 complex (Ubiquinol-cytochrome c reductase)"/>
    <property type="match status" value="1"/>
</dbReference>
<dbReference type="SUPFAM" id="SSF81342">
    <property type="entry name" value="Transmembrane di-heme cytochromes"/>
    <property type="match status" value="1"/>
</dbReference>
<dbReference type="PROSITE" id="PS51003">
    <property type="entry name" value="CYTB_CTER"/>
    <property type="match status" value="1"/>
</dbReference>
<dbReference type="PROSITE" id="PS51002">
    <property type="entry name" value="CYTB_NTER"/>
    <property type="match status" value="1"/>
</dbReference>
<protein>
    <recommendedName>
        <fullName>Cytochrome b</fullName>
    </recommendedName>
    <alternativeName>
        <fullName>Complex III subunit 3</fullName>
    </alternativeName>
    <alternativeName>
        <fullName>Complex III subunit III</fullName>
    </alternativeName>
    <alternativeName>
        <fullName>Cytochrome b-c1 complex subunit 3</fullName>
    </alternativeName>
    <alternativeName>
        <fullName>Ubiquinol-cytochrome-c reductase complex cytochrome b subunit</fullName>
    </alternativeName>
</protein>
<name>CYB_PETCO</name>